<organism>
    <name type="scientific">Xanthomonas campestris pv. campestris (strain ATCC 33913 / DSM 3586 / NCPPB 528 / LMG 568 / P 25)</name>
    <dbReference type="NCBI Taxonomy" id="190485"/>
    <lineage>
        <taxon>Bacteria</taxon>
        <taxon>Pseudomonadati</taxon>
        <taxon>Pseudomonadota</taxon>
        <taxon>Gammaproteobacteria</taxon>
        <taxon>Lysobacterales</taxon>
        <taxon>Lysobacteraceae</taxon>
        <taxon>Xanthomonas</taxon>
    </lineage>
</organism>
<feature type="chain" id="PRO_0000108752" description="Ribosomal RNA small subunit methyltransferase H">
    <location>
        <begin position="1"/>
        <end position="342"/>
    </location>
</feature>
<feature type="region of interest" description="Disordered" evidence="2">
    <location>
        <begin position="309"/>
        <end position="342"/>
    </location>
</feature>
<feature type="compositionally biased region" description="Polar residues" evidence="2">
    <location>
        <begin position="333"/>
        <end position="342"/>
    </location>
</feature>
<feature type="binding site" evidence="1">
    <location>
        <begin position="36"/>
        <end position="38"/>
    </location>
    <ligand>
        <name>S-adenosyl-L-methionine</name>
        <dbReference type="ChEBI" id="CHEBI:59789"/>
    </ligand>
</feature>
<feature type="binding site" evidence="1">
    <location>
        <position position="56"/>
    </location>
    <ligand>
        <name>S-adenosyl-L-methionine</name>
        <dbReference type="ChEBI" id="CHEBI:59789"/>
    </ligand>
</feature>
<feature type="binding site" evidence="1">
    <location>
        <position position="82"/>
    </location>
    <ligand>
        <name>S-adenosyl-L-methionine</name>
        <dbReference type="ChEBI" id="CHEBI:59789"/>
    </ligand>
</feature>
<feature type="binding site" evidence="1">
    <location>
        <position position="100"/>
    </location>
    <ligand>
        <name>S-adenosyl-L-methionine</name>
        <dbReference type="ChEBI" id="CHEBI:59789"/>
    </ligand>
</feature>
<feature type="binding site" evidence="1">
    <location>
        <position position="107"/>
    </location>
    <ligand>
        <name>S-adenosyl-L-methionine</name>
        <dbReference type="ChEBI" id="CHEBI:59789"/>
    </ligand>
</feature>
<comment type="function">
    <text evidence="1">Specifically methylates the N4 position of cytidine in position 1402 (C1402) of 16S rRNA.</text>
</comment>
<comment type="catalytic activity">
    <reaction evidence="1">
        <text>cytidine(1402) in 16S rRNA + S-adenosyl-L-methionine = N(4)-methylcytidine(1402) in 16S rRNA + S-adenosyl-L-homocysteine + H(+)</text>
        <dbReference type="Rhea" id="RHEA:42928"/>
        <dbReference type="Rhea" id="RHEA-COMP:10286"/>
        <dbReference type="Rhea" id="RHEA-COMP:10287"/>
        <dbReference type="ChEBI" id="CHEBI:15378"/>
        <dbReference type="ChEBI" id="CHEBI:57856"/>
        <dbReference type="ChEBI" id="CHEBI:59789"/>
        <dbReference type="ChEBI" id="CHEBI:74506"/>
        <dbReference type="ChEBI" id="CHEBI:82748"/>
        <dbReference type="EC" id="2.1.1.199"/>
    </reaction>
</comment>
<comment type="subcellular location">
    <subcellularLocation>
        <location evidence="1">Cytoplasm</location>
    </subcellularLocation>
</comment>
<comment type="similarity">
    <text evidence="1">Belongs to the methyltransferase superfamily. RsmH family.</text>
</comment>
<proteinExistence type="inferred from homology"/>
<keyword id="KW-0963">Cytoplasm</keyword>
<keyword id="KW-0489">Methyltransferase</keyword>
<keyword id="KW-1185">Reference proteome</keyword>
<keyword id="KW-0698">rRNA processing</keyword>
<keyword id="KW-0949">S-adenosyl-L-methionine</keyword>
<keyword id="KW-0808">Transferase</keyword>
<dbReference type="EC" id="2.1.1.199" evidence="1"/>
<dbReference type="EMBL" id="AE008922">
    <property type="protein sequence ID" value="AAM40033.1"/>
    <property type="molecule type" value="Genomic_DNA"/>
</dbReference>
<dbReference type="RefSeq" id="NP_636109.1">
    <property type="nucleotide sequence ID" value="NC_003902.1"/>
</dbReference>
<dbReference type="SMR" id="Q8PCK7"/>
<dbReference type="STRING" id="190485.XCC0718"/>
<dbReference type="EnsemblBacteria" id="AAM40033">
    <property type="protein sequence ID" value="AAM40033"/>
    <property type="gene ID" value="XCC0718"/>
</dbReference>
<dbReference type="KEGG" id="xcc:XCC0718"/>
<dbReference type="PATRIC" id="fig|190485.4.peg.782"/>
<dbReference type="eggNOG" id="COG0275">
    <property type="taxonomic scope" value="Bacteria"/>
</dbReference>
<dbReference type="HOGENOM" id="CLU_038422_2_0_6"/>
<dbReference type="OrthoDB" id="9806637at2"/>
<dbReference type="Proteomes" id="UP000001010">
    <property type="component" value="Chromosome"/>
</dbReference>
<dbReference type="GO" id="GO:0005737">
    <property type="term" value="C:cytoplasm"/>
    <property type="evidence" value="ECO:0000318"/>
    <property type="project" value="GO_Central"/>
</dbReference>
<dbReference type="GO" id="GO:0071424">
    <property type="term" value="F:rRNA (cytosine-N4-)-methyltransferase activity"/>
    <property type="evidence" value="ECO:0000318"/>
    <property type="project" value="GO_Central"/>
</dbReference>
<dbReference type="GO" id="GO:0070475">
    <property type="term" value="P:rRNA base methylation"/>
    <property type="evidence" value="ECO:0000318"/>
    <property type="project" value="GO_Central"/>
</dbReference>
<dbReference type="FunFam" id="1.10.150.170:FF:000001">
    <property type="entry name" value="Ribosomal RNA small subunit methyltransferase H"/>
    <property type="match status" value="1"/>
</dbReference>
<dbReference type="Gene3D" id="1.10.150.170">
    <property type="entry name" value="Putative methyltransferase TM0872, insert domain"/>
    <property type="match status" value="1"/>
</dbReference>
<dbReference type="Gene3D" id="3.40.50.150">
    <property type="entry name" value="Vaccinia Virus protein VP39"/>
    <property type="match status" value="1"/>
</dbReference>
<dbReference type="HAMAP" id="MF_01007">
    <property type="entry name" value="16SrRNA_methyltr_H"/>
    <property type="match status" value="1"/>
</dbReference>
<dbReference type="InterPro" id="IPR002903">
    <property type="entry name" value="RsmH"/>
</dbReference>
<dbReference type="InterPro" id="IPR023397">
    <property type="entry name" value="SAM-dep_MeTrfase_MraW_recog"/>
</dbReference>
<dbReference type="InterPro" id="IPR029063">
    <property type="entry name" value="SAM-dependent_MTases_sf"/>
</dbReference>
<dbReference type="NCBIfam" id="TIGR00006">
    <property type="entry name" value="16S rRNA (cytosine(1402)-N(4))-methyltransferase RsmH"/>
    <property type="match status" value="1"/>
</dbReference>
<dbReference type="PANTHER" id="PTHR11265:SF0">
    <property type="entry name" value="12S RRNA N4-METHYLCYTIDINE METHYLTRANSFERASE"/>
    <property type="match status" value="1"/>
</dbReference>
<dbReference type="PANTHER" id="PTHR11265">
    <property type="entry name" value="S-ADENOSYL-METHYLTRANSFERASE MRAW"/>
    <property type="match status" value="1"/>
</dbReference>
<dbReference type="Pfam" id="PF01795">
    <property type="entry name" value="Methyltransf_5"/>
    <property type="match status" value="1"/>
</dbReference>
<dbReference type="PIRSF" id="PIRSF004486">
    <property type="entry name" value="MraW"/>
    <property type="match status" value="1"/>
</dbReference>
<dbReference type="SUPFAM" id="SSF81799">
    <property type="entry name" value="Putative methyltransferase TM0872, insert domain"/>
    <property type="match status" value="1"/>
</dbReference>
<dbReference type="SUPFAM" id="SSF53335">
    <property type="entry name" value="S-adenosyl-L-methionine-dependent methyltransferases"/>
    <property type="match status" value="1"/>
</dbReference>
<name>RSMH_XANCP</name>
<gene>
    <name evidence="1" type="primary">rsmH</name>
    <name type="synonym">mraW</name>
    <name type="ordered locus">XCC0718</name>
</gene>
<sequence>MSQPPAAHVPVLYTQVLEGLQVTENGTYLDGTFGRGGHARGVLEHLGPGGRLLVMDKDPEAIAVAEHTFGGDARVSIHRGSFAGLGQVVAAATVDGILLDLGVSSPQLDVAGRGFSFGKDGPLDMRMDPDSGQSAAGWLAQATDREIADVLWTYGEERQSRRIARAIVARRGEQPLLRTAQLADLIASVMPRGDSKTHPATRSFQAIRIHINRELADLEAGLDAALGALKPGGRLAVISFHSLEDRIVKQFMARYAKAPPSNRRLPEAQPFVPTLQLVSGAIKADDSELAVNPRARSAVLRVAEKLGMENRESGMGKGHGAAASRFPTPDSRFPTSPNGDAP</sequence>
<protein>
    <recommendedName>
        <fullName evidence="1">Ribosomal RNA small subunit methyltransferase H</fullName>
        <ecNumber evidence="1">2.1.1.199</ecNumber>
    </recommendedName>
    <alternativeName>
        <fullName evidence="1">16S rRNA m(4)C1402 methyltransferase</fullName>
    </alternativeName>
    <alternativeName>
        <fullName evidence="1">rRNA (cytosine-N(4)-)-methyltransferase RsmH</fullName>
    </alternativeName>
</protein>
<evidence type="ECO:0000255" key="1">
    <source>
        <dbReference type="HAMAP-Rule" id="MF_01007"/>
    </source>
</evidence>
<evidence type="ECO:0000256" key="2">
    <source>
        <dbReference type="SAM" id="MobiDB-lite"/>
    </source>
</evidence>
<accession>Q8PCK7</accession>
<reference key="1">
    <citation type="journal article" date="2002" name="Nature">
        <title>Comparison of the genomes of two Xanthomonas pathogens with differing host specificities.</title>
        <authorList>
            <person name="da Silva A.C.R."/>
            <person name="Ferro J.A."/>
            <person name="Reinach F.C."/>
            <person name="Farah C.S."/>
            <person name="Furlan L.R."/>
            <person name="Quaggio R.B."/>
            <person name="Monteiro-Vitorello C.B."/>
            <person name="Van Sluys M.A."/>
            <person name="Almeida N.F. Jr."/>
            <person name="Alves L.M.C."/>
            <person name="do Amaral A.M."/>
            <person name="Bertolini M.C."/>
            <person name="Camargo L.E.A."/>
            <person name="Camarotte G."/>
            <person name="Cannavan F."/>
            <person name="Cardozo J."/>
            <person name="Chambergo F."/>
            <person name="Ciapina L.P."/>
            <person name="Cicarelli R.M.B."/>
            <person name="Coutinho L.L."/>
            <person name="Cursino-Santos J.R."/>
            <person name="El-Dorry H."/>
            <person name="Faria J.B."/>
            <person name="Ferreira A.J.S."/>
            <person name="Ferreira R.C.C."/>
            <person name="Ferro M.I.T."/>
            <person name="Formighieri E.F."/>
            <person name="Franco M.C."/>
            <person name="Greggio C.C."/>
            <person name="Gruber A."/>
            <person name="Katsuyama A.M."/>
            <person name="Kishi L.T."/>
            <person name="Leite R.P."/>
            <person name="Lemos E.G.M."/>
            <person name="Lemos M.V.F."/>
            <person name="Locali E.C."/>
            <person name="Machado M.A."/>
            <person name="Madeira A.M.B.N."/>
            <person name="Martinez-Rossi N.M."/>
            <person name="Martins E.C."/>
            <person name="Meidanis J."/>
            <person name="Menck C.F.M."/>
            <person name="Miyaki C.Y."/>
            <person name="Moon D.H."/>
            <person name="Moreira L.M."/>
            <person name="Novo M.T.M."/>
            <person name="Okura V.K."/>
            <person name="Oliveira M.C."/>
            <person name="Oliveira V.R."/>
            <person name="Pereira H.A."/>
            <person name="Rossi A."/>
            <person name="Sena J.A.D."/>
            <person name="Silva C."/>
            <person name="de Souza R.F."/>
            <person name="Spinola L.A.F."/>
            <person name="Takita M.A."/>
            <person name="Tamura R.E."/>
            <person name="Teixeira E.C."/>
            <person name="Tezza R.I.D."/>
            <person name="Trindade dos Santos M."/>
            <person name="Truffi D."/>
            <person name="Tsai S.M."/>
            <person name="White F.F."/>
            <person name="Setubal J.C."/>
            <person name="Kitajima J.P."/>
        </authorList>
    </citation>
    <scope>NUCLEOTIDE SEQUENCE [LARGE SCALE GENOMIC DNA]</scope>
    <source>
        <strain>ATCC 33913 / DSM 3586 / NCPPB 528 / LMG 568 / P 25</strain>
    </source>
</reference>